<comment type="function">
    <text evidence="1">One of the primary rRNA binding proteins. Required for association of the 30S and 50S subunits to form the 70S ribosome, for tRNA binding and peptide bond formation. It has been suggested to have peptidyltransferase activity; this is somewhat controversial. Makes several contacts with the 16S rRNA in the 70S ribosome.</text>
</comment>
<comment type="subunit">
    <text evidence="1">Part of the 50S ribosomal subunit. Forms a bridge to the 30S subunit in the 70S ribosome.</text>
</comment>
<comment type="similarity">
    <text evidence="1">Belongs to the universal ribosomal protein uL2 family.</text>
</comment>
<sequence>MAIRTFRPYTPGTRTRVVTDFNEVTGRKPERSLVVAKHRRKGRNNRGVITCRHRGGGHKRLYRIVDFRRNKHGIPAKVAAIHYDPHRKAHLALLFYTDGEKRYILAPAGIAIGQQLISGPESPIETGNALPLSAIPLGSSVHNVELYAGRGGQMARTAGSSAQVMAKEGDYVALKLPSTEVRLVRHECYATLGEVGNSEVRNTSLGKAGRRRWLGRRPQVRGSVMNPCDHPHGGGEGRAPIGRSGPVTPWGKPALGLKTRKRNKPSNRFVLRKRRRTSKRSRGGRDS</sequence>
<evidence type="ECO:0000255" key="1">
    <source>
        <dbReference type="HAMAP-Rule" id="MF_01320"/>
    </source>
</evidence>
<evidence type="ECO:0000256" key="2">
    <source>
        <dbReference type="SAM" id="MobiDB-lite"/>
    </source>
</evidence>
<evidence type="ECO:0000305" key="3"/>
<dbReference type="EMBL" id="BX548175">
    <property type="protein sequence ID" value="CAE21910.1"/>
    <property type="molecule type" value="Genomic_DNA"/>
</dbReference>
<dbReference type="RefSeq" id="WP_011131102.1">
    <property type="nucleotide sequence ID" value="NC_005071.1"/>
</dbReference>
<dbReference type="SMR" id="Q7V539"/>
<dbReference type="KEGG" id="pmt:PMT_1735"/>
<dbReference type="eggNOG" id="COG0090">
    <property type="taxonomic scope" value="Bacteria"/>
</dbReference>
<dbReference type="HOGENOM" id="CLU_036235_2_1_3"/>
<dbReference type="OrthoDB" id="9778722at2"/>
<dbReference type="Proteomes" id="UP000001423">
    <property type="component" value="Chromosome"/>
</dbReference>
<dbReference type="GO" id="GO:0015934">
    <property type="term" value="C:large ribosomal subunit"/>
    <property type="evidence" value="ECO:0007669"/>
    <property type="project" value="InterPro"/>
</dbReference>
<dbReference type="GO" id="GO:0019843">
    <property type="term" value="F:rRNA binding"/>
    <property type="evidence" value="ECO:0007669"/>
    <property type="project" value="UniProtKB-UniRule"/>
</dbReference>
<dbReference type="GO" id="GO:0003735">
    <property type="term" value="F:structural constituent of ribosome"/>
    <property type="evidence" value="ECO:0007669"/>
    <property type="project" value="InterPro"/>
</dbReference>
<dbReference type="GO" id="GO:0016740">
    <property type="term" value="F:transferase activity"/>
    <property type="evidence" value="ECO:0007669"/>
    <property type="project" value="InterPro"/>
</dbReference>
<dbReference type="GO" id="GO:0006412">
    <property type="term" value="P:translation"/>
    <property type="evidence" value="ECO:0007669"/>
    <property type="project" value="UniProtKB-UniRule"/>
</dbReference>
<dbReference type="FunFam" id="2.30.30.30:FF:000001">
    <property type="entry name" value="50S ribosomal protein L2"/>
    <property type="match status" value="1"/>
</dbReference>
<dbReference type="FunFam" id="2.40.50.140:FF:000003">
    <property type="entry name" value="50S ribosomal protein L2"/>
    <property type="match status" value="1"/>
</dbReference>
<dbReference type="FunFam" id="4.10.950.10:FF:000001">
    <property type="entry name" value="50S ribosomal protein L2"/>
    <property type="match status" value="1"/>
</dbReference>
<dbReference type="Gene3D" id="2.30.30.30">
    <property type="match status" value="1"/>
</dbReference>
<dbReference type="Gene3D" id="2.40.50.140">
    <property type="entry name" value="Nucleic acid-binding proteins"/>
    <property type="match status" value="1"/>
</dbReference>
<dbReference type="Gene3D" id="4.10.950.10">
    <property type="entry name" value="Ribosomal protein L2, domain 3"/>
    <property type="match status" value="1"/>
</dbReference>
<dbReference type="HAMAP" id="MF_01320_B">
    <property type="entry name" value="Ribosomal_uL2_B"/>
    <property type="match status" value="1"/>
</dbReference>
<dbReference type="InterPro" id="IPR012340">
    <property type="entry name" value="NA-bd_OB-fold"/>
</dbReference>
<dbReference type="InterPro" id="IPR014722">
    <property type="entry name" value="Rib_uL2_dom2"/>
</dbReference>
<dbReference type="InterPro" id="IPR002171">
    <property type="entry name" value="Ribosomal_uL2"/>
</dbReference>
<dbReference type="InterPro" id="IPR005880">
    <property type="entry name" value="Ribosomal_uL2_bac/org-type"/>
</dbReference>
<dbReference type="InterPro" id="IPR022669">
    <property type="entry name" value="Ribosomal_uL2_C"/>
</dbReference>
<dbReference type="InterPro" id="IPR022671">
    <property type="entry name" value="Ribosomal_uL2_CS"/>
</dbReference>
<dbReference type="InterPro" id="IPR014726">
    <property type="entry name" value="Ribosomal_uL2_dom3"/>
</dbReference>
<dbReference type="InterPro" id="IPR022666">
    <property type="entry name" value="Ribosomal_uL2_RNA-bd_dom"/>
</dbReference>
<dbReference type="InterPro" id="IPR008991">
    <property type="entry name" value="Translation_prot_SH3-like_sf"/>
</dbReference>
<dbReference type="NCBIfam" id="TIGR01171">
    <property type="entry name" value="rplB_bact"/>
    <property type="match status" value="1"/>
</dbReference>
<dbReference type="PANTHER" id="PTHR13691:SF5">
    <property type="entry name" value="LARGE RIBOSOMAL SUBUNIT PROTEIN UL2M"/>
    <property type="match status" value="1"/>
</dbReference>
<dbReference type="PANTHER" id="PTHR13691">
    <property type="entry name" value="RIBOSOMAL PROTEIN L2"/>
    <property type="match status" value="1"/>
</dbReference>
<dbReference type="Pfam" id="PF00181">
    <property type="entry name" value="Ribosomal_L2"/>
    <property type="match status" value="1"/>
</dbReference>
<dbReference type="Pfam" id="PF03947">
    <property type="entry name" value="Ribosomal_L2_C"/>
    <property type="match status" value="1"/>
</dbReference>
<dbReference type="PIRSF" id="PIRSF002158">
    <property type="entry name" value="Ribosomal_L2"/>
    <property type="match status" value="1"/>
</dbReference>
<dbReference type="SMART" id="SM01383">
    <property type="entry name" value="Ribosomal_L2"/>
    <property type="match status" value="1"/>
</dbReference>
<dbReference type="SMART" id="SM01382">
    <property type="entry name" value="Ribosomal_L2_C"/>
    <property type="match status" value="1"/>
</dbReference>
<dbReference type="SUPFAM" id="SSF50249">
    <property type="entry name" value="Nucleic acid-binding proteins"/>
    <property type="match status" value="1"/>
</dbReference>
<dbReference type="SUPFAM" id="SSF50104">
    <property type="entry name" value="Translation proteins SH3-like domain"/>
    <property type="match status" value="1"/>
</dbReference>
<dbReference type="PROSITE" id="PS00467">
    <property type="entry name" value="RIBOSOMAL_L2"/>
    <property type="match status" value="1"/>
</dbReference>
<feature type="chain" id="PRO_0000129597" description="Large ribosomal subunit protein uL2">
    <location>
        <begin position="1"/>
        <end position="287"/>
    </location>
</feature>
<feature type="region of interest" description="Disordered" evidence="2">
    <location>
        <begin position="221"/>
        <end position="287"/>
    </location>
</feature>
<feature type="compositionally biased region" description="Basic residues" evidence="2">
    <location>
        <begin position="258"/>
        <end position="287"/>
    </location>
</feature>
<keyword id="KW-1185">Reference proteome</keyword>
<keyword id="KW-0687">Ribonucleoprotein</keyword>
<keyword id="KW-0689">Ribosomal protein</keyword>
<keyword id="KW-0694">RNA-binding</keyword>
<keyword id="KW-0699">rRNA-binding</keyword>
<name>RL2_PROMM</name>
<protein>
    <recommendedName>
        <fullName evidence="1">Large ribosomal subunit protein uL2</fullName>
    </recommendedName>
    <alternativeName>
        <fullName evidence="3">50S ribosomal protein L2</fullName>
    </alternativeName>
</protein>
<proteinExistence type="inferred from homology"/>
<organism>
    <name type="scientific">Prochlorococcus marinus (strain MIT 9313)</name>
    <dbReference type="NCBI Taxonomy" id="74547"/>
    <lineage>
        <taxon>Bacteria</taxon>
        <taxon>Bacillati</taxon>
        <taxon>Cyanobacteriota</taxon>
        <taxon>Cyanophyceae</taxon>
        <taxon>Synechococcales</taxon>
        <taxon>Prochlorococcaceae</taxon>
        <taxon>Prochlorococcus</taxon>
    </lineage>
</organism>
<gene>
    <name evidence="1" type="primary">rplB</name>
    <name evidence="1" type="synonym">rpl2</name>
    <name type="ordered locus">PMT_1735</name>
</gene>
<accession>Q7V539</accession>
<reference key="1">
    <citation type="journal article" date="2003" name="Nature">
        <title>Genome divergence in two Prochlorococcus ecotypes reflects oceanic niche differentiation.</title>
        <authorList>
            <person name="Rocap G."/>
            <person name="Larimer F.W."/>
            <person name="Lamerdin J.E."/>
            <person name="Malfatti S."/>
            <person name="Chain P."/>
            <person name="Ahlgren N.A."/>
            <person name="Arellano A."/>
            <person name="Coleman M."/>
            <person name="Hauser L."/>
            <person name="Hess W.R."/>
            <person name="Johnson Z.I."/>
            <person name="Land M.L."/>
            <person name="Lindell D."/>
            <person name="Post A.F."/>
            <person name="Regala W."/>
            <person name="Shah M."/>
            <person name="Shaw S.L."/>
            <person name="Steglich C."/>
            <person name="Sullivan M.B."/>
            <person name="Ting C.S."/>
            <person name="Tolonen A."/>
            <person name="Webb E.A."/>
            <person name="Zinser E.R."/>
            <person name="Chisholm S.W."/>
        </authorList>
    </citation>
    <scope>NUCLEOTIDE SEQUENCE [LARGE SCALE GENOMIC DNA]</scope>
    <source>
        <strain>MIT 9313</strain>
    </source>
</reference>